<name>PANCY_SYNP6</name>
<organism>
    <name type="scientific">Synechococcus sp. (strain ATCC 27144 / PCC 6301 / SAUG 1402/1)</name>
    <name type="common">Anacystis nidulans</name>
    <dbReference type="NCBI Taxonomy" id="269084"/>
    <lineage>
        <taxon>Bacteria</taxon>
        <taxon>Bacillati</taxon>
        <taxon>Cyanobacteriota</taxon>
        <taxon>Cyanophyceae</taxon>
        <taxon>Synechococcales</taxon>
        <taxon>Synechococcaceae</taxon>
        <taxon>Synechococcus</taxon>
    </lineage>
</organism>
<feature type="chain" id="PRO_0000239797" description="Bifunctional pantoate ligase/cytidylate kinase">
    <location>
        <begin position="1"/>
        <end position="527"/>
    </location>
</feature>
<feature type="region of interest" description="Pantoate--beta-alanine ligase" evidence="1">
    <location>
        <begin position="1"/>
        <end position="277"/>
    </location>
</feature>
<feature type="region of interest" description="Cytidylate kinase" evidence="1">
    <location>
        <begin position="278"/>
        <end position="527"/>
    </location>
</feature>
<feature type="region of interest" description="Disordered" evidence="2">
    <location>
        <begin position="507"/>
        <end position="527"/>
    </location>
</feature>
<feature type="compositionally biased region" description="Polar residues" evidence="2">
    <location>
        <begin position="511"/>
        <end position="527"/>
    </location>
</feature>
<feature type="active site" description="Proton donor" evidence="1">
    <location>
        <position position="34"/>
    </location>
</feature>
<feature type="binding site" evidence="1">
    <location>
        <begin position="27"/>
        <end position="34"/>
    </location>
    <ligand>
        <name>ATP</name>
        <dbReference type="ChEBI" id="CHEBI:30616"/>
    </ligand>
</feature>
<feature type="binding site" evidence="1">
    <location>
        <position position="58"/>
    </location>
    <ligand>
        <name>(R)-pantoate</name>
        <dbReference type="ChEBI" id="CHEBI:15980"/>
    </ligand>
</feature>
<feature type="binding site" evidence="1">
    <location>
        <position position="58"/>
    </location>
    <ligand>
        <name>beta-alanine</name>
        <dbReference type="ChEBI" id="CHEBI:57966"/>
    </ligand>
</feature>
<feature type="binding site" evidence="1">
    <location>
        <begin position="147"/>
        <end position="150"/>
    </location>
    <ligand>
        <name>ATP</name>
        <dbReference type="ChEBI" id="CHEBI:30616"/>
    </ligand>
</feature>
<feature type="binding site" evidence="1">
    <location>
        <position position="153"/>
    </location>
    <ligand>
        <name>(R)-pantoate</name>
        <dbReference type="ChEBI" id="CHEBI:15980"/>
    </ligand>
</feature>
<feature type="binding site" evidence="1">
    <location>
        <position position="176"/>
    </location>
    <ligand>
        <name>ATP</name>
        <dbReference type="ChEBI" id="CHEBI:30616"/>
    </ligand>
</feature>
<feature type="binding site" evidence="1">
    <location>
        <begin position="184"/>
        <end position="187"/>
    </location>
    <ligand>
        <name>ATP</name>
        <dbReference type="ChEBI" id="CHEBI:30616"/>
    </ligand>
</feature>
<protein>
    <recommendedName>
        <fullName evidence="1">Bifunctional pantoate ligase/cytidylate kinase</fullName>
    </recommendedName>
    <domain>
        <recommendedName>
            <fullName evidence="1">Pantothenate synthetase</fullName>
            <shortName evidence="1">PS</shortName>
            <ecNumber evidence="1">6.3.2.1</ecNumber>
        </recommendedName>
        <alternativeName>
            <fullName evidence="1">Pantoate--beta-alanine ligase</fullName>
        </alternativeName>
        <alternativeName>
            <fullName evidence="1">Pantoate-activating enzyme</fullName>
        </alternativeName>
    </domain>
    <domain>
        <recommendedName>
            <fullName evidence="1">Cytidylate kinase</fullName>
            <shortName evidence="1">CK</shortName>
            <ecNumber evidence="1">2.7.4.25</ecNumber>
        </recommendedName>
        <alternativeName>
            <fullName evidence="1">Cytidine monophosphate kinase</fullName>
            <shortName evidence="1">CMP kinase</shortName>
        </alternativeName>
    </domain>
</protein>
<dbReference type="EC" id="6.3.2.1" evidence="1"/>
<dbReference type="EC" id="2.7.4.25" evidence="1"/>
<dbReference type="EMBL" id="AP008231">
    <property type="protein sequence ID" value="BAD78589.1"/>
    <property type="molecule type" value="Genomic_DNA"/>
</dbReference>
<dbReference type="RefSeq" id="WP_011242711.1">
    <property type="nucleotide sequence ID" value="NZ_CP085785.1"/>
</dbReference>
<dbReference type="SMR" id="Q5N530"/>
<dbReference type="KEGG" id="syc:syc0399_d"/>
<dbReference type="eggNOG" id="COG0283">
    <property type="taxonomic scope" value="Bacteria"/>
</dbReference>
<dbReference type="eggNOG" id="COG0414">
    <property type="taxonomic scope" value="Bacteria"/>
</dbReference>
<dbReference type="UniPathway" id="UPA00028">
    <property type="reaction ID" value="UER00005"/>
</dbReference>
<dbReference type="Proteomes" id="UP000001175">
    <property type="component" value="Chromosome"/>
</dbReference>
<dbReference type="GO" id="GO:0005829">
    <property type="term" value="C:cytosol"/>
    <property type="evidence" value="ECO:0007669"/>
    <property type="project" value="TreeGrafter"/>
</dbReference>
<dbReference type="GO" id="GO:0005524">
    <property type="term" value="F:ATP binding"/>
    <property type="evidence" value="ECO:0007669"/>
    <property type="project" value="UniProtKB-UniRule"/>
</dbReference>
<dbReference type="GO" id="GO:0036430">
    <property type="term" value="F:CMP kinase activity"/>
    <property type="evidence" value="ECO:0007669"/>
    <property type="project" value="RHEA"/>
</dbReference>
<dbReference type="GO" id="GO:0036431">
    <property type="term" value="F:dCMP kinase activity"/>
    <property type="evidence" value="ECO:0007669"/>
    <property type="project" value="RHEA"/>
</dbReference>
<dbReference type="GO" id="GO:0004592">
    <property type="term" value="F:pantoate-beta-alanine ligase activity"/>
    <property type="evidence" value="ECO:0007669"/>
    <property type="project" value="UniProtKB-UniRule"/>
</dbReference>
<dbReference type="GO" id="GO:0015949">
    <property type="term" value="P:nucleobase-containing small molecule interconversion"/>
    <property type="evidence" value="ECO:0007669"/>
    <property type="project" value="TreeGrafter"/>
</dbReference>
<dbReference type="GO" id="GO:0015940">
    <property type="term" value="P:pantothenate biosynthetic process"/>
    <property type="evidence" value="ECO:0007669"/>
    <property type="project" value="UniProtKB-UniRule"/>
</dbReference>
<dbReference type="GO" id="GO:0006220">
    <property type="term" value="P:pyrimidine nucleotide metabolic process"/>
    <property type="evidence" value="ECO:0007669"/>
    <property type="project" value="UniProtKB-UniRule"/>
</dbReference>
<dbReference type="CDD" id="cd02020">
    <property type="entry name" value="CMPK"/>
    <property type="match status" value="1"/>
</dbReference>
<dbReference type="CDD" id="cd02019">
    <property type="entry name" value="NK"/>
    <property type="match status" value="1"/>
</dbReference>
<dbReference type="CDD" id="cd00560">
    <property type="entry name" value="PanC"/>
    <property type="match status" value="1"/>
</dbReference>
<dbReference type="FunFam" id="3.30.1300.10:FF:000001">
    <property type="entry name" value="Pantothenate synthetase"/>
    <property type="match status" value="1"/>
</dbReference>
<dbReference type="FunFam" id="3.40.50.620:FF:000114">
    <property type="entry name" value="Pantothenate synthetase"/>
    <property type="match status" value="1"/>
</dbReference>
<dbReference type="Gene3D" id="3.40.50.620">
    <property type="entry name" value="HUPs"/>
    <property type="match status" value="1"/>
</dbReference>
<dbReference type="Gene3D" id="3.40.50.300">
    <property type="entry name" value="P-loop containing nucleotide triphosphate hydrolases"/>
    <property type="match status" value="1"/>
</dbReference>
<dbReference type="Gene3D" id="3.30.1300.10">
    <property type="entry name" value="Pantoate-beta-alanine ligase, C-terminal domain"/>
    <property type="match status" value="1"/>
</dbReference>
<dbReference type="HAMAP" id="MF_00238">
    <property type="entry name" value="Cytidyl_kinase_type1"/>
    <property type="match status" value="1"/>
</dbReference>
<dbReference type="HAMAP" id="MF_00158">
    <property type="entry name" value="PanC"/>
    <property type="match status" value="1"/>
</dbReference>
<dbReference type="HAMAP" id="MF_01349">
    <property type="entry name" value="PanCY"/>
    <property type="match status" value="1"/>
</dbReference>
<dbReference type="InterPro" id="IPR004821">
    <property type="entry name" value="Cyt_trans-like"/>
</dbReference>
<dbReference type="InterPro" id="IPR003136">
    <property type="entry name" value="Cytidylate_kin"/>
</dbReference>
<dbReference type="InterPro" id="IPR011994">
    <property type="entry name" value="Cytidylate_kinase_dom"/>
</dbReference>
<dbReference type="InterPro" id="IPR027417">
    <property type="entry name" value="P-loop_NTPase"/>
</dbReference>
<dbReference type="InterPro" id="IPR003721">
    <property type="entry name" value="Pantoate_ligase"/>
</dbReference>
<dbReference type="InterPro" id="IPR024894">
    <property type="entry name" value="Pantoate_ligase/cytidylate_kin"/>
</dbReference>
<dbReference type="InterPro" id="IPR042176">
    <property type="entry name" value="Pantoate_ligase_C"/>
</dbReference>
<dbReference type="InterPro" id="IPR014729">
    <property type="entry name" value="Rossmann-like_a/b/a_fold"/>
</dbReference>
<dbReference type="NCBIfam" id="TIGR00017">
    <property type="entry name" value="cmk"/>
    <property type="match status" value="1"/>
</dbReference>
<dbReference type="NCBIfam" id="TIGR00125">
    <property type="entry name" value="cyt_tran_rel"/>
    <property type="match status" value="1"/>
</dbReference>
<dbReference type="NCBIfam" id="TIGR00018">
    <property type="entry name" value="panC"/>
    <property type="match status" value="1"/>
</dbReference>
<dbReference type="NCBIfam" id="NF010004">
    <property type="entry name" value="PRK13477.1"/>
    <property type="match status" value="1"/>
</dbReference>
<dbReference type="PANTHER" id="PTHR21299:SF2">
    <property type="entry name" value="CYTIDYLATE KINASE"/>
    <property type="match status" value="1"/>
</dbReference>
<dbReference type="PANTHER" id="PTHR21299">
    <property type="entry name" value="CYTIDYLATE KINASE/PANTOATE-BETA-ALANINE LIGASE"/>
    <property type="match status" value="1"/>
</dbReference>
<dbReference type="Pfam" id="PF02224">
    <property type="entry name" value="Cytidylate_kin"/>
    <property type="match status" value="1"/>
</dbReference>
<dbReference type="Pfam" id="PF02569">
    <property type="entry name" value="Pantoate_ligase"/>
    <property type="match status" value="1"/>
</dbReference>
<dbReference type="SUPFAM" id="SSF52374">
    <property type="entry name" value="Nucleotidylyl transferase"/>
    <property type="match status" value="1"/>
</dbReference>
<dbReference type="SUPFAM" id="SSF52540">
    <property type="entry name" value="P-loop containing nucleoside triphosphate hydrolases"/>
    <property type="match status" value="1"/>
</dbReference>
<reference key="1">
    <citation type="journal article" date="2007" name="Photosyn. Res.">
        <title>Complete nucleotide sequence of the freshwater unicellular cyanobacterium Synechococcus elongatus PCC 6301 chromosome: gene content and organization.</title>
        <authorList>
            <person name="Sugita C."/>
            <person name="Ogata K."/>
            <person name="Shikata M."/>
            <person name="Jikuya H."/>
            <person name="Takano J."/>
            <person name="Furumichi M."/>
            <person name="Kanehisa M."/>
            <person name="Omata T."/>
            <person name="Sugiura M."/>
            <person name="Sugita M."/>
        </authorList>
    </citation>
    <scope>NUCLEOTIDE SEQUENCE [LARGE SCALE GENOMIC DNA]</scope>
    <source>
        <strain>ATCC 27144 / PCC 6301 / SAUG 1402/1</strain>
    </source>
</reference>
<sequence>MRQLISPEALRAFRQSVQGSVGFVPTMGALHAGHRSLIERSRQQDDVVIVSIFVNPRQFGPQEDLSRYPQTLDADLALCEAAGVDAVFCPTAEALYPRPSDRSTGVQPPAELIQSLCGRQRPGHFQGVATVVLKLLQLVQPQRAYFGEKDAQQLRVIQRLVEDFNLPIAIVPCPTVREPDGLALSSRNRYLTFEERSQASGLYRALRAAAECFQAGSRDSQELVAAATAVLATTPAVQLEYCDCVDADSLQPLTQIPDRALLAIAARVGTARLIDNLTLQGRRPIIAIDGPAGAGKSTVTKRLAQQLGLLYLDTGAMYRAVTWLVQQQGIDPQDPIVLAELLAQADLQLRSQPAADGSEQLQVLIQGNDVTAAIRTPTVTAQVSAIAALPLVRQFLVEQQRQLGQRGGLVAEGRDIGTHVFPDAELKIFLTATNAERARRRALDLEAQGLTVDLAQLEAEIRDRDRQDSERAIAPLCKAEDAVEVLTDGLSIEAVTDQIIRLYRDRGLGDSSPQATPGQTPSPLSLG</sequence>
<evidence type="ECO:0000255" key="1">
    <source>
        <dbReference type="HAMAP-Rule" id="MF_01349"/>
    </source>
</evidence>
<evidence type="ECO:0000256" key="2">
    <source>
        <dbReference type="SAM" id="MobiDB-lite"/>
    </source>
</evidence>
<keyword id="KW-0067">ATP-binding</keyword>
<keyword id="KW-0963">Cytoplasm</keyword>
<keyword id="KW-0418">Kinase</keyword>
<keyword id="KW-0436">Ligase</keyword>
<keyword id="KW-0511">Multifunctional enzyme</keyword>
<keyword id="KW-0547">Nucleotide-binding</keyword>
<keyword id="KW-0566">Pantothenate biosynthesis</keyword>
<keyword id="KW-0808">Transferase</keyword>
<gene>
    <name evidence="1" type="primary">panC/cmk</name>
    <name type="ordered locus">syc0399_d</name>
</gene>
<proteinExistence type="inferred from homology"/>
<accession>Q5N530</accession>
<comment type="function">
    <text evidence="1">Catalyzes the condensation of pantoate with beta-alanine in an ATP-dependent reaction via a pantoyl-adenylate intermediate.</text>
</comment>
<comment type="function">
    <text evidence="1">Catalyzes the transfer of a phosphate group from ATP to either CMP or dCMP to form CDP or dCDP and ADP, respectively.</text>
</comment>
<comment type="catalytic activity">
    <reaction evidence="1">
        <text>(R)-pantoate + beta-alanine + ATP = (R)-pantothenate + AMP + diphosphate + H(+)</text>
        <dbReference type="Rhea" id="RHEA:10912"/>
        <dbReference type="ChEBI" id="CHEBI:15378"/>
        <dbReference type="ChEBI" id="CHEBI:15980"/>
        <dbReference type="ChEBI" id="CHEBI:29032"/>
        <dbReference type="ChEBI" id="CHEBI:30616"/>
        <dbReference type="ChEBI" id="CHEBI:33019"/>
        <dbReference type="ChEBI" id="CHEBI:57966"/>
        <dbReference type="ChEBI" id="CHEBI:456215"/>
        <dbReference type="EC" id="6.3.2.1"/>
    </reaction>
</comment>
<comment type="catalytic activity">
    <reaction evidence="1">
        <text>CMP + ATP = CDP + ADP</text>
        <dbReference type="Rhea" id="RHEA:11600"/>
        <dbReference type="ChEBI" id="CHEBI:30616"/>
        <dbReference type="ChEBI" id="CHEBI:58069"/>
        <dbReference type="ChEBI" id="CHEBI:60377"/>
        <dbReference type="ChEBI" id="CHEBI:456216"/>
        <dbReference type="EC" id="2.7.4.25"/>
    </reaction>
</comment>
<comment type="catalytic activity">
    <reaction evidence="1">
        <text>dCMP + ATP = dCDP + ADP</text>
        <dbReference type="Rhea" id="RHEA:25094"/>
        <dbReference type="ChEBI" id="CHEBI:30616"/>
        <dbReference type="ChEBI" id="CHEBI:57566"/>
        <dbReference type="ChEBI" id="CHEBI:58593"/>
        <dbReference type="ChEBI" id="CHEBI:456216"/>
        <dbReference type="EC" id="2.7.4.25"/>
    </reaction>
</comment>
<comment type="pathway">
    <text evidence="1">Cofactor biosynthesis; (R)-pantothenate biosynthesis; (R)-pantothenate from (R)-pantoate and beta-alanine: step 1/1.</text>
</comment>
<comment type="subcellular location">
    <subcellularLocation>
        <location evidence="1">Cytoplasm</location>
    </subcellularLocation>
</comment>
<comment type="similarity">
    <text evidence="1">In the N-terminal section; belongs to the pantothenate synthetase family.</text>
</comment>
<comment type="similarity">
    <text evidence="1">In the C-terminal section; belongs to the cytidylate kinase family. Type 1 subfamily.</text>
</comment>